<proteinExistence type="inferred from homology"/>
<reference key="1">
    <citation type="journal article" date="2009" name="Vaccine">
        <title>Whole genome sequence analysis of Mycobacterium bovis bacillus Calmette-Guerin (BCG) Tokyo 172: a comparative study of BCG vaccine substrains.</title>
        <authorList>
            <person name="Seki M."/>
            <person name="Honda I."/>
            <person name="Fujita I."/>
            <person name="Yano I."/>
            <person name="Yamamoto S."/>
            <person name="Koyama A."/>
        </authorList>
    </citation>
    <scope>NUCLEOTIDE SEQUENCE [LARGE SCALE GENOMIC DNA]</scope>
    <source>
        <strain>BCG / Tokyo 172 / ATCC 35737 / TMC 1019</strain>
    </source>
</reference>
<name>GCS2_MYCBT</name>
<sequence>MPARRSAARIDFAGSPRPTLGVEWEFALVDSQTRDLSNEATAVIAEIGENPRVHKELLRNTVEIVSGICECTAEAMQDLRDTLGPARQIVRDRGMELFCAGTHPFARWSAQKLTDAPRYAELIKRTQWWGRQMLIWGVHVHVGIRSAHKVMPIMTSLLNYYPHLLALSASSPWWGGEDTGYASNRAMMFQQLPTAGLPFHFQRWAEFEGFVYDQKKTGIIDHMDEIRWDIRPSPHLGTLEVRICDGVSNLRELGALVALTHCLIVDLDRRLDAGETLPTMPPWHVQENKWRAARYGLDAVIILDADSNERLVTDDLADVLTRLEPVAKSLNCADELAAVSDIYRDGASYQRQLRVAQQHDGDLRAVVDALVAELVI</sequence>
<gene>
    <name type="ordered locus">JTY_0442</name>
</gene>
<comment type="function">
    <text evidence="1">ATP-dependent carboxylate-amine ligase which exhibits weak glutamate--cysteine ligase activity.</text>
</comment>
<comment type="catalytic activity">
    <reaction evidence="1">
        <text>L-cysteine + L-glutamate + ATP = gamma-L-glutamyl-L-cysteine + ADP + phosphate + H(+)</text>
        <dbReference type="Rhea" id="RHEA:13285"/>
        <dbReference type="ChEBI" id="CHEBI:15378"/>
        <dbReference type="ChEBI" id="CHEBI:29985"/>
        <dbReference type="ChEBI" id="CHEBI:30616"/>
        <dbReference type="ChEBI" id="CHEBI:35235"/>
        <dbReference type="ChEBI" id="CHEBI:43474"/>
        <dbReference type="ChEBI" id="CHEBI:58173"/>
        <dbReference type="ChEBI" id="CHEBI:456216"/>
        <dbReference type="EC" id="6.3.2.2"/>
    </reaction>
</comment>
<comment type="similarity">
    <text evidence="1">Belongs to the glutamate--cysteine ligase type 2 family. YbdK subfamily.</text>
</comment>
<dbReference type="EC" id="6.3.2.2" evidence="1"/>
<dbReference type="EMBL" id="AP010918">
    <property type="protein sequence ID" value="BAH24738.1"/>
    <property type="molecule type" value="Genomic_DNA"/>
</dbReference>
<dbReference type="RefSeq" id="WP_003900145.1">
    <property type="nucleotide sequence ID" value="NZ_CP014566.1"/>
</dbReference>
<dbReference type="SMR" id="C1AKA9"/>
<dbReference type="KEGG" id="mbt:JTY_0442"/>
<dbReference type="HOGENOM" id="CLU_044848_1_0_11"/>
<dbReference type="GO" id="GO:0005524">
    <property type="term" value="F:ATP binding"/>
    <property type="evidence" value="ECO:0007669"/>
    <property type="project" value="UniProtKB-KW"/>
</dbReference>
<dbReference type="GO" id="GO:0004357">
    <property type="term" value="F:glutamate-cysteine ligase activity"/>
    <property type="evidence" value="ECO:0007669"/>
    <property type="project" value="UniProtKB-EC"/>
</dbReference>
<dbReference type="GO" id="GO:0042398">
    <property type="term" value="P:modified amino acid biosynthetic process"/>
    <property type="evidence" value="ECO:0007669"/>
    <property type="project" value="InterPro"/>
</dbReference>
<dbReference type="FunFam" id="3.30.590.20:FF:000004">
    <property type="entry name" value="Putative glutamate--cysteine ligase 2"/>
    <property type="match status" value="1"/>
</dbReference>
<dbReference type="Gene3D" id="3.30.590.20">
    <property type="match status" value="1"/>
</dbReference>
<dbReference type="HAMAP" id="MF_01609">
    <property type="entry name" value="Glu_cys_ligase_2"/>
    <property type="match status" value="1"/>
</dbReference>
<dbReference type="InterPro" id="IPR050141">
    <property type="entry name" value="GCL_type2/YbdK_subfam"/>
</dbReference>
<dbReference type="InterPro" id="IPR006336">
    <property type="entry name" value="GCS2"/>
</dbReference>
<dbReference type="InterPro" id="IPR014746">
    <property type="entry name" value="Gln_synth/guanido_kin_cat_dom"/>
</dbReference>
<dbReference type="InterPro" id="IPR011793">
    <property type="entry name" value="YbdK"/>
</dbReference>
<dbReference type="NCBIfam" id="TIGR02050">
    <property type="entry name" value="gshA_cyan_rel"/>
    <property type="match status" value="1"/>
</dbReference>
<dbReference type="NCBIfam" id="NF010042">
    <property type="entry name" value="PRK13517.1-2"/>
    <property type="match status" value="1"/>
</dbReference>
<dbReference type="NCBIfam" id="NF010043">
    <property type="entry name" value="PRK13517.1-3"/>
    <property type="match status" value="1"/>
</dbReference>
<dbReference type="NCBIfam" id="NF010044">
    <property type="entry name" value="PRK13517.1-4"/>
    <property type="match status" value="1"/>
</dbReference>
<dbReference type="PANTHER" id="PTHR36510">
    <property type="entry name" value="GLUTAMATE--CYSTEINE LIGASE 2-RELATED"/>
    <property type="match status" value="1"/>
</dbReference>
<dbReference type="PANTHER" id="PTHR36510:SF1">
    <property type="entry name" value="GLUTAMATE--CYSTEINE LIGASE 2-RELATED"/>
    <property type="match status" value="1"/>
</dbReference>
<dbReference type="Pfam" id="PF04107">
    <property type="entry name" value="GCS2"/>
    <property type="match status" value="1"/>
</dbReference>
<dbReference type="SUPFAM" id="SSF55931">
    <property type="entry name" value="Glutamine synthetase/guanido kinase"/>
    <property type="match status" value="1"/>
</dbReference>
<protein>
    <recommendedName>
        <fullName evidence="1">Putative glutamate--cysteine ligase 2</fullName>
        <ecNumber evidence="1">6.3.2.2</ecNumber>
    </recommendedName>
    <alternativeName>
        <fullName evidence="1">Gamma-glutamylcysteine synthetase 2</fullName>
        <shortName evidence="1">GCS 2</shortName>
        <shortName evidence="1">Gamma-GCS 2</shortName>
    </alternativeName>
</protein>
<keyword id="KW-0067">ATP-binding</keyword>
<keyword id="KW-0436">Ligase</keyword>
<keyword id="KW-0547">Nucleotide-binding</keyword>
<organism>
    <name type="scientific">Mycobacterium bovis (strain BCG / Tokyo 172 / ATCC 35737 / TMC 1019)</name>
    <dbReference type="NCBI Taxonomy" id="561275"/>
    <lineage>
        <taxon>Bacteria</taxon>
        <taxon>Bacillati</taxon>
        <taxon>Actinomycetota</taxon>
        <taxon>Actinomycetes</taxon>
        <taxon>Mycobacteriales</taxon>
        <taxon>Mycobacteriaceae</taxon>
        <taxon>Mycobacterium</taxon>
        <taxon>Mycobacterium tuberculosis complex</taxon>
    </lineage>
</organism>
<feature type="chain" id="PRO_1000185852" description="Putative glutamate--cysteine ligase 2">
    <location>
        <begin position="1"/>
        <end position="376"/>
    </location>
</feature>
<evidence type="ECO:0000255" key="1">
    <source>
        <dbReference type="HAMAP-Rule" id="MF_01609"/>
    </source>
</evidence>
<accession>C1AKA9</accession>